<feature type="chain" id="PRO_0000337937" description="Cell cycle protein GpsB">
    <location>
        <begin position="1"/>
        <end position="114"/>
    </location>
</feature>
<feature type="region of interest" description="Disordered" evidence="2">
    <location>
        <begin position="74"/>
        <end position="99"/>
    </location>
</feature>
<feature type="coiled-coil region" evidence="1">
    <location>
        <begin position="42"/>
        <end position="77"/>
    </location>
</feature>
<feature type="compositionally biased region" description="Low complexity" evidence="2">
    <location>
        <begin position="85"/>
        <end position="97"/>
    </location>
</feature>
<keyword id="KW-0131">Cell cycle</keyword>
<keyword id="KW-0132">Cell division</keyword>
<keyword id="KW-0133">Cell shape</keyword>
<keyword id="KW-0175">Coiled coil</keyword>
<keyword id="KW-0963">Cytoplasm</keyword>
<proteinExistence type="inferred from homology"/>
<comment type="function">
    <text evidence="1">Divisome component that associates with the complex late in its assembly, after the Z-ring is formed, and is dependent on DivIC and PBP2B for its recruitment to the divisome. Together with EzrA, is a key component of the system that regulates PBP1 localization during cell cycle progression. Its main role could be the removal of PBP1 from the cell pole after pole maturation is completed. Also contributes to the recruitment of PBP1 to the division complex. Not essential for septum formation.</text>
</comment>
<comment type="subunit">
    <text evidence="1">Forms polymers through the coiled coil domains. Interacts with PBP1, MreC and EzrA.</text>
</comment>
<comment type="subcellular location">
    <subcellularLocation>
        <location evidence="1">Cytoplasm</location>
    </subcellularLocation>
    <text evidence="1">Shuttles between the lateral wall and the division site in a cell cycle-dependent manner.</text>
</comment>
<comment type="similarity">
    <text evidence="1">Belongs to the GpsB family.</text>
</comment>
<gene>
    <name evidence="1" type="primary">gpsB</name>
    <name type="ordered locus">SAHV_1434</name>
</gene>
<accession>A7X2D9</accession>
<dbReference type="EMBL" id="AP009324">
    <property type="protein sequence ID" value="BAF78317.1"/>
    <property type="molecule type" value="Genomic_DNA"/>
</dbReference>
<dbReference type="RefSeq" id="WP_001286320.1">
    <property type="nucleotide sequence ID" value="NZ_CTYB01000006.1"/>
</dbReference>
<dbReference type="SMR" id="A7X2D9"/>
<dbReference type="GeneID" id="98345812"/>
<dbReference type="KEGG" id="saw:SAHV_1434"/>
<dbReference type="HOGENOM" id="CLU_140309_1_0_9"/>
<dbReference type="GO" id="GO:0005737">
    <property type="term" value="C:cytoplasm"/>
    <property type="evidence" value="ECO:0007669"/>
    <property type="project" value="UniProtKB-SubCell"/>
</dbReference>
<dbReference type="GO" id="GO:0051301">
    <property type="term" value="P:cell division"/>
    <property type="evidence" value="ECO:0007669"/>
    <property type="project" value="UniProtKB-UniRule"/>
</dbReference>
<dbReference type="GO" id="GO:0008360">
    <property type="term" value="P:regulation of cell shape"/>
    <property type="evidence" value="ECO:0007669"/>
    <property type="project" value="UniProtKB-UniRule"/>
</dbReference>
<dbReference type="Gene3D" id="6.10.250.660">
    <property type="match status" value="1"/>
</dbReference>
<dbReference type="HAMAP" id="MF_02011">
    <property type="entry name" value="GpsB"/>
    <property type="match status" value="1"/>
</dbReference>
<dbReference type="InterPro" id="IPR011229">
    <property type="entry name" value="Cell_cycle_GpsB"/>
</dbReference>
<dbReference type="InterPro" id="IPR019933">
    <property type="entry name" value="DivIVA_domain"/>
</dbReference>
<dbReference type="InterPro" id="IPR007793">
    <property type="entry name" value="DivIVA_fam"/>
</dbReference>
<dbReference type="NCBIfam" id="TIGR03544">
    <property type="entry name" value="DivI1A_domain"/>
    <property type="match status" value="1"/>
</dbReference>
<dbReference type="NCBIfam" id="NF010725">
    <property type="entry name" value="PRK14127.1"/>
    <property type="match status" value="1"/>
</dbReference>
<dbReference type="PANTHER" id="PTHR35794:SF1">
    <property type="entry name" value="CELL CYCLE PROTEIN GPSB"/>
    <property type="match status" value="1"/>
</dbReference>
<dbReference type="PANTHER" id="PTHR35794">
    <property type="entry name" value="CELL DIVISION PROTEIN DIVIVA"/>
    <property type="match status" value="1"/>
</dbReference>
<dbReference type="Pfam" id="PF05103">
    <property type="entry name" value="DivIVA"/>
    <property type="match status" value="1"/>
</dbReference>
<dbReference type="PIRSF" id="PIRSF029938">
    <property type="entry name" value="UCP029938"/>
    <property type="match status" value="1"/>
</dbReference>
<reference key="1">
    <citation type="journal article" date="2008" name="Antimicrob. Agents Chemother.">
        <title>Mutated response regulator graR is responsible for phenotypic conversion of Staphylococcus aureus from heterogeneous vancomycin-intermediate resistance to vancomycin-intermediate resistance.</title>
        <authorList>
            <person name="Neoh H.-M."/>
            <person name="Cui L."/>
            <person name="Yuzawa H."/>
            <person name="Takeuchi F."/>
            <person name="Matsuo M."/>
            <person name="Hiramatsu K."/>
        </authorList>
    </citation>
    <scope>NUCLEOTIDE SEQUENCE [LARGE SCALE GENOMIC DNA]</scope>
    <source>
        <strain>Mu3 / ATCC 700698</strain>
    </source>
</reference>
<organism>
    <name type="scientific">Staphylococcus aureus (strain Mu3 / ATCC 700698)</name>
    <dbReference type="NCBI Taxonomy" id="418127"/>
    <lineage>
        <taxon>Bacteria</taxon>
        <taxon>Bacillati</taxon>
        <taxon>Bacillota</taxon>
        <taxon>Bacilli</taxon>
        <taxon>Bacillales</taxon>
        <taxon>Staphylococcaceae</taxon>
        <taxon>Staphylococcus</taxon>
    </lineage>
</organism>
<evidence type="ECO:0000255" key="1">
    <source>
        <dbReference type="HAMAP-Rule" id="MF_02011"/>
    </source>
</evidence>
<evidence type="ECO:0000256" key="2">
    <source>
        <dbReference type="SAM" id="MobiDB-lite"/>
    </source>
</evidence>
<name>GPSB_STAA1</name>
<sequence length="114" mass="13151">MSDVSLKLSAKDIYEKDFEKTMARGYRREEVDAFLDDIIADYQKMADMNNEVVKLSEENHKLKKELEELRLRVATSRPQDNKSFSSNNTTTNTSSNNVDILKRISNLEKAVFGK</sequence>
<protein>
    <recommendedName>
        <fullName evidence="1">Cell cycle protein GpsB</fullName>
    </recommendedName>
    <alternativeName>
        <fullName evidence="1">Guiding PBP1-shuttling protein</fullName>
    </alternativeName>
</protein>